<sequence length="124" mass="13410">MASTARSLRYALAILTTSLVTPSVWAHAHLTHQYPAANAQVTAAPQAITLNFSEGVETGFSGAKITGPKNENIKTLPAKRNEQDQKQLIVPLADSLKPGTYTVDWHVVSVDGHKTKGHYTFSVK</sequence>
<comment type="subcellular location">
    <subcellularLocation>
        <location evidence="1">Periplasm</location>
    </subcellularLocation>
</comment>
<comment type="similarity">
    <text evidence="3">Belongs to the CopC family.</text>
</comment>
<reference key="1">
    <citation type="journal article" date="1997" name="Science">
        <title>The complete genome sequence of Escherichia coli K-12.</title>
        <authorList>
            <person name="Blattner F.R."/>
            <person name="Plunkett G. III"/>
            <person name="Bloch C.A."/>
            <person name="Perna N.T."/>
            <person name="Burland V."/>
            <person name="Riley M."/>
            <person name="Collado-Vides J."/>
            <person name="Glasner J.D."/>
            <person name="Rode C.K."/>
            <person name="Mayhew G.F."/>
            <person name="Gregor J."/>
            <person name="Davis N.W."/>
            <person name="Kirkpatrick H.A."/>
            <person name="Goeden M.A."/>
            <person name="Rose D.J."/>
            <person name="Mau B."/>
            <person name="Shao Y."/>
        </authorList>
    </citation>
    <scope>NUCLEOTIDE SEQUENCE [LARGE SCALE GENOMIC DNA]</scope>
    <source>
        <strain>K12 / MG1655 / ATCC 47076</strain>
    </source>
</reference>
<reference key="2">
    <citation type="journal article" date="2006" name="Mol. Syst. Biol.">
        <title>Highly accurate genome sequences of Escherichia coli K-12 strains MG1655 and W3110.</title>
        <authorList>
            <person name="Hayashi K."/>
            <person name="Morooka N."/>
            <person name="Yamamoto Y."/>
            <person name="Fujita K."/>
            <person name="Isono K."/>
            <person name="Choi S."/>
            <person name="Ohtsubo E."/>
            <person name="Baba T."/>
            <person name="Wanner B.L."/>
            <person name="Mori H."/>
            <person name="Horiuchi T."/>
        </authorList>
    </citation>
    <scope>NUCLEOTIDE SEQUENCE [LARGE SCALE GENOMIC DNA]</scope>
    <source>
        <strain>K12 / W3110 / ATCC 27325 / DSM 5911</strain>
    </source>
</reference>
<reference key="3">
    <citation type="journal article" date="2000" name="Eur. J. Biochem.">
        <title>Proteomic analysis of the Escherichia coli outer membrane.</title>
        <authorList>
            <person name="Molloy M.P."/>
            <person name="Herbert B.R."/>
            <person name="Slade M.B."/>
            <person name="Rabilloud T."/>
            <person name="Nouwens A.S."/>
            <person name="Williams K.L."/>
            <person name="Gooley A.A."/>
        </authorList>
    </citation>
    <scope>IDENTIFICATION BY MASS SPECTROMETRY</scope>
</reference>
<accession>P0AA57</accession>
<accession>P76279</accession>
<accession>Q2MB11</accession>
<organism>
    <name type="scientific">Escherichia coli (strain K12)</name>
    <dbReference type="NCBI Taxonomy" id="83333"/>
    <lineage>
        <taxon>Bacteria</taxon>
        <taxon>Pseudomonadati</taxon>
        <taxon>Pseudomonadota</taxon>
        <taxon>Gammaproteobacteria</taxon>
        <taxon>Enterobacterales</taxon>
        <taxon>Enterobacteriaceae</taxon>
        <taxon>Escherichia</taxon>
    </lineage>
</organism>
<name>YOBA_ECOLI</name>
<feature type="signal peptide" evidence="2">
    <location>
        <begin position="1"/>
        <end position="26"/>
    </location>
</feature>
<feature type="chain" id="PRO_0000006028" description="Protein YobA">
    <location>
        <begin position="27"/>
        <end position="124"/>
    </location>
</feature>
<feature type="binding site" evidence="2">
    <location>
        <position position="27"/>
    </location>
    <ligand>
        <name>Cu cation</name>
        <dbReference type="ChEBI" id="CHEBI:23378"/>
    </ligand>
</feature>
<feature type="binding site" evidence="2">
    <location>
        <position position="113"/>
    </location>
    <ligand>
        <name>Cu cation</name>
        <dbReference type="ChEBI" id="CHEBI:23378"/>
    </ligand>
</feature>
<keyword id="KW-0186">Copper</keyword>
<keyword id="KW-0479">Metal-binding</keyword>
<keyword id="KW-0574">Periplasm</keyword>
<keyword id="KW-1185">Reference proteome</keyword>
<keyword id="KW-0732">Signal</keyword>
<proteinExistence type="evidence at protein level"/>
<evidence type="ECO:0000250" key="1"/>
<evidence type="ECO:0000255" key="2"/>
<evidence type="ECO:0000305" key="3"/>
<gene>
    <name type="primary">yobA</name>
    <name type="ordered locus">b1841</name>
    <name type="ordered locus">JW1830</name>
</gene>
<dbReference type="EMBL" id="U00096">
    <property type="protein sequence ID" value="AAC74911.1"/>
    <property type="molecule type" value="Genomic_DNA"/>
</dbReference>
<dbReference type="EMBL" id="AP009048">
    <property type="protein sequence ID" value="BAE76545.1"/>
    <property type="molecule type" value="Genomic_DNA"/>
</dbReference>
<dbReference type="PIR" id="A64946">
    <property type="entry name" value="A64946"/>
</dbReference>
<dbReference type="RefSeq" id="NP_416355.1">
    <property type="nucleotide sequence ID" value="NC_000913.3"/>
</dbReference>
<dbReference type="RefSeq" id="WP_000168747.1">
    <property type="nucleotide sequence ID" value="NZ_SSZK01000001.1"/>
</dbReference>
<dbReference type="SMR" id="P0AA57"/>
<dbReference type="BioGRID" id="4260360">
    <property type="interactions" value="49"/>
</dbReference>
<dbReference type="FunCoup" id="P0AA57">
    <property type="interactions" value="14"/>
</dbReference>
<dbReference type="IntAct" id="P0AA57">
    <property type="interactions" value="5"/>
</dbReference>
<dbReference type="STRING" id="511145.b1841"/>
<dbReference type="jPOST" id="P0AA57"/>
<dbReference type="PaxDb" id="511145-b1841"/>
<dbReference type="EnsemblBacteria" id="AAC74911">
    <property type="protein sequence ID" value="AAC74911"/>
    <property type="gene ID" value="b1841"/>
</dbReference>
<dbReference type="GeneID" id="75171912"/>
<dbReference type="GeneID" id="948315"/>
<dbReference type="KEGG" id="ecj:JW1830"/>
<dbReference type="KEGG" id="eco:b1841"/>
<dbReference type="KEGG" id="ecoc:C3026_10490"/>
<dbReference type="PATRIC" id="fig|511145.12.peg.1919"/>
<dbReference type="EchoBASE" id="EB3783"/>
<dbReference type="eggNOG" id="COG2372">
    <property type="taxonomic scope" value="Bacteria"/>
</dbReference>
<dbReference type="HOGENOM" id="CLU_087859_4_2_6"/>
<dbReference type="InParanoid" id="P0AA57"/>
<dbReference type="OMA" id="VNWHVLS"/>
<dbReference type="OrthoDB" id="9796814at2"/>
<dbReference type="PhylomeDB" id="P0AA57"/>
<dbReference type="BioCyc" id="EcoCyc:G7014-MONOMER"/>
<dbReference type="PRO" id="PR:P0AA57"/>
<dbReference type="Proteomes" id="UP000000625">
    <property type="component" value="Chromosome"/>
</dbReference>
<dbReference type="GO" id="GO:0030288">
    <property type="term" value="C:outer membrane-bounded periplasmic space"/>
    <property type="evidence" value="ECO:0000314"/>
    <property type="project" value="EcoCyc"/>
</dbReference>
<dbReference type="GO" id="GO:0005507">
    <property type="term" value="F:copper ion binding"/>
    <property type="evidence" value="ECO:0000314"/>
    <property type="project" value="EcoCyc"/>
</dbReference>
<dbReference type="GO" id="GO:0055070">
    <property type="term" value="P:copper ion homeostasis"/>
    <property type="evidence" value="ECO:0000314"/>
    <property type="project" value="EcoCyc"/>
</dbReference>
<dbReference type="GO" id="GO:0006825">
    <property type="term" value="P:copper ion transport"/>
    <property type="evidence" value="ECO:0007669"/>
    <property type="project" value="InterPro"/>
</dbReference>
<dbReference type="GO" id="GO:0046688">
    <property type="term" value="P:response to copper ion"/>
    <property type="evidence" value="ECO:0007669"/>
    <property type="project" value="InterPro"/>
</dbReference>
<dbReference type="FunFam" id="2.60.40.1220:FF:000001">
    <property type="entry name" value="CopC domain-containing protein YobA"/>
    <property type="match status" value="1"/>
</dbReference>
<dbReference type="Gene3D" id="2.60.40.1220">
    <property type="match status" value="1"/>
</dbReference>
<dbReference type="InterPro" id="IPR047685">
    <property type="entry name" value="CopC-like"/>
</dbReference>
<dbReference type="InterPro" id="IPR032694">
    <property type="entry name" value="CopC/D"/>
</dbReference>
<dbReference type="InterPro" id="IPR007348">
    <property type="entry name" value="CopC_dom"/>
</dbReference>
<dbReference type="InterPro" id="IPR014755">
    <property type="entry name" value="Cu-Rt/internalin_Ig-like"/>
</dbReference>
<dbReference type="InterPro" id="IPR014756">
    <property type="entry name" value="Ig_E-set"/>
</dbReference>
<dbReference type="NCBIfam" id="NF033814">
    <property type="entry name" value="copper_CopC"/>
    <property type="match status" value="1"/>
</dbReference>
<dbReference type="NCBIfam" id="NF007636">
    <property type="entry name" value="PRK10301.1"/>
    <property type="match status" value="1"/>
</dbReference>
<dbReference type="PANTHER" id="PTHR34820">
    <property type="entry name" value="INNER MEMBRANE PROTEIN YEBZ"/>
    <property type="match status" value="1"/>
</dbReference>
<dbReference type="PANTHER" id="PTHR34820:SF4">
    <property type="entry name" value="INNER MEMBRANE PROTEIN YEBZ"/>
    <property type="match status" value="1"/>
</dbReference>
<dbReference type="Pfam" id="PF04234">
    <property type="entry name" value="CopC"/>
    <property type="match status" value="1"/>
</dbReference>
<dbReference type="SUPFAM" id="SSF81296">
    <property type="entry name" value="E set domains"/>
    <property type="match status" value="1"/>
</dbReference>
<protein>
    <recommendedName>
        <fullName>Protein YobA</fullName>
    </recommendedName>
</protein>